<name>DRS1_NEUCR</name>
<protein>
    <recommendedName>
        <fullName>ATP-dependent RNA helicase drs1</fullName>
        <ecNumber>3.6.4.13</ecNumber>
    </recommendedName>
    <alternativeName>
        <fullName>DEAD box RNA helicase 11</fullName>
    </alternativeName>
</protein>
<proteinExistence type="inferred from homology"/>
<evidence type="ECO:0000250" key="1"/>
<evidence type="ECO:0000255" key="2">
    <source>
        <dbReference type="PROSITE-ProRule" id="PRU00541"/>
    </source>
</evidence>
<evidence type="ECO:0000255" key="3">
    <source>
        <dbReference type="PROSITE-ProRule" id="PRU00542"/>
    </source>
</evidence>
<evidence type="ECO:0000256" key="4">
    <source>
        <dbReference type="SAM" id="MobiDB-lite"/>
    </source>
</evidence>
<evidence type="ECO:0000305" key="5"/>
<reference key="1">
    <citation type="journal article" date="2003" name="Nature">
        <title>The genome sequence of the filamentous fungus Neurospora crassa.</title>
        <authorList>
            <person name="Galagan J.E."/>
            <person name="Calvo S.E."/>
            <person name="Borkovich K.A."/>
            <person name="Selker E.U."/>
            <person name="Read N.D."/>
            <person name="Jaffe D.B."/>
            <person name="FitzHugh W."/>
            <person name="Ma L.-J."/>
            <person name="Smirnov S."/>
            <person name="Purcell S."/>
            <person name="Rehman B."/>
            <person name="Elkins T."/>
            <person name="Engels R."/>
            <person name="Wang S."/>
            <person name="Nielsen C.B."/>
            <person name="Butler J."/>
            <person name="Endrizzi M."/>
            <person name="Qui D."/>
            <person name="Ianakiev P."/>
            <person name="Bell-Pedersen D."/>
            <person name="Nelson M.A."/>
            <person name="Werner-Washburne M."/>
            <person name="Selitrennikoff C.P."/>
            <person name="Kinsey J.A."/>
            <person name="Braun E.L."/>
            <person name="Zelter A."/>
            <person name="Schulte U."/>
            <person name="Kothe G.O."/>
            <person name="Jedd G."/>
            <person name="Mewes H.-W."/>
            <person name="Staben C."/>
            <person name="Marcotte E."/>
            <person name="Greenberg D."/>
            <person name="Roy A."/>
            <person name="Foley K."/>
            <person name="Naylor J."/>
            <person name="Stange-Thomann N."/>
            <person name="Barrett R."/>
            <person name="Gnerre S."/>
            <person name="Kamal M."/>
            <person name="Kamvysselis M."/>
            <person name="Mauceli E.W."/>
            <person name="Bielke C."/>
            <person name="Rudd S."/>
            <person name="Frishman D."/>
            <person name="Krystofova S."/>
            <person name="Rasmussen C."/>
            <person name="Metzenberg R.L."/>
            <person name="Perkins D.D."/>
            <person name="Kroken S."/>
            <person name="Cogoni C."/>
            <person name="Macino G."/>
            <person name="Catcheside D.E.A."/>
            <person name="Li W."/>
            <person name="Pratt R.J."/>
            <person name="Osmani S.A."/>
            <person name="DeSouza C.P.C."/>
            <person name="Glass N.L."/>
            <person name="Orbach M.J."/>
            <person name="Berglund J.A."/>
            <person name="Voelker R."/>
            <person name="Yarden O."/>
            <person name="Plamann M."/>
            <person name="Seiler S."/>
            <person name="Dunlap J.C."/>
            <person name="Radford A."/>
            <person name="Aramayo R."/>
            <person name="Natvig D.O."/>
            <person name="Alex L.A."/>
            <person name="Mannhaupt G."/>
            <person name="Ebbole D.J."/>
            <person name="Freitag M."/>
            <person name="Paulsen I."/>
            <person name="Sachs M.S."/>
            <person name="Lander E.S."/>
            <person name="Nusbaum C."/>
            <person name="Birren B.W."/>
        </authorList>
    </citation>
    <scope>NUCLEOTIDE SEQUENCE [LARGE SCALE GENOMIC DNA]</scope>
    <source>
        <strain>ATCC 24698 / 74-OR23-1A / CBS 708.71 / DSM 1257 / FGSC 987</strain>
    </source>
</reference>
<accession>P0C2N8</accession>
<accession>A7UVU0</accession>
<accession>Q7RZX6</accession>
<organism>
    <name type="scientific">Neurospora crassa (strain ATCC 24698 / 74-OR23-1A / CBS 708.71 / DSM 1257 / FGSC 987)</name>
    <dbReference type="NCBI Taxonomy" id="367110"/>
    <lineage>
        <taxon>Eukaryota</taxon>
        <taxon>Fungi</taxon>
        <taxon>Dikarya</taxon>
        <taxon>Ascomycota</taxon>
        <taxon>Pezizomycotina</taxon>
        <taxon>Sordariomycetes</taxon>
        <taxon>Sordariomycetidae</taxon>
        <taxon>Sordariales</taxon>
        <taxon>Sordariaceae</taxon>
        <taxon>Neurospora</taxon>
    </lineage>
</organism>
<dbReference type="EC" id="3.6.4.13"/>
<dbReference type="EMBL" id="CM002238">
    <property type="protein sequence ID" value="EDO65410.2"/>
    <property type="molecule type" value="Genomic_DNA"/>
</dbReference>
<dbReference type="RefSeq" id="XP_001728501.2">
    <property type="nucleotide sequence ID" value="XM_001728449.2"/>
</dbReference>
<dbReference type="SMR" id="P0C2N8"/>
<dbReference type="FunCoup" id="P0C2N8">
    <property type="interactions" value="838"/>
</dbReference>
<dbReference type="STRING" id="367110.P0C2N8"/>
<dbReference type="PaxDb" id="5141-EFNCRP00000000021"/>
<dbReference type="EnsemblFungi" id="EDO65410">
    <property type="protein sequence ID" value="EDO65410"/>
    <property type="gene ID" value="NCU11175"/>
</dbReference>
<dbReference type="GeneID" id="5847888"/>
<dbReference type="KEGG" id="ncr:NCU11175"/>
<dbReference type="VEuPathDB" id="FungiDB:NCU11175"/>
<dbReference type="HOGENOM" id="CLU_003041_3_1_1"/>
<dbReference type="InParanoid" id="P0C2N8"/>
<dbReference type="OrthoDB" id="10259843at2759"/>
<dbReference type="Proteomes" id="UP000001805">
    <property type="component" value="Chromosome 3, Linkage Group III"/>
</dbReference>
<dbReference type="GO" id="GO:0005730">
    <property type="term" value="C:nucleolus"/>
    <property type="evidence" value="ECO:0000318"/>
    <property type="project" value="GO_Central"/>
</dbReference>
<dbReference type="GO" id="GO:0030687">
    <property type="term" value="C:preribosome, large subunit precursor"/>
    <property type="evidence" value="ECO:0007669"/>
    <property type="project" value="EnsemblFungi"/>
</dbReference>
<dbReference type="GO" id="GO:0005524">
    <property type="term" value="F:ATP binding"/>
    <property type="evidence" value="ECO:0007669"/>
    <property type="project" value="UniProtKB-KW"/>
</dbReference>
<dbReference type="GO" id="GO:0016887">
    <property type="term" value="F:ATP hydrolysis activity"/>
    <property type="evidence" value="ECO:0007669"/>
    <property type="project" value="RHEA"/>
</dbReference>
<dbReference type="GO" id="GO:0003723">
    <property type="term" value="F:RNA binding"/>
    <property type="evidence" value="ECO:0007669"/>
    <property type="project" value="UniProtKB-KW"/>
</dbReference>
<dbReference type="GO" id="GO:0003724">
    <property type="term" value="F:RNA helicase activity"/>
    <property type="evidence" value="ECO:0007669"/>
    <property type="project" value="UniProtKB-EC"/>
</dbReference>
<dbReference type="GO" id="GO:0000027">
    <property type="term" value="P:ribosomal large subunit assembly"/>
    <property type="evidence" value="ECO:0007669"/>
    <property type="project" value="EnsemblFungi"/>
</dbReference>
<dbReference type="GO" id="GO:0006364">
    <property type="term" value="P:rRNA processing"/>
    <property type="evidence" value="ECO:0007669"/>
    <property type="project" value="EnsemblFungi"/>
</dbReference>
<dbReference type="CDD" id="cd17947">
    <property type="entry name" value="DEADc_DDX27"/>
    <property type="match status" value="1"/>
</dbReference>
<dbReference type="CDD" id="cd18787">
    <property type="entry name" value="SF2_C_DEAD"/>
    <property type="match status" value="1"/>
</dbReference>
<dbReference type="Gene3D" id="3.40.50.300">
    <property type="entry name" value="P-loop containing nucleotide triphosphate hydrolases"/>
    <property type="match status" value="2"/>
</dbReference>
<dbReference type="InterPro" id="IPR011545">
    <property type="entry name" value="DEAD/DEAH_box_helicase_dom"/>
</dbReference>
<dbReference type="InterPro" id="IPR050079">
    <property type="entry name" value="DEAD_box_RNA_helicase"/>
</dbReference>
<dbReference type="InterPro" id="IPR014001">
    <property type="entry name" value="Helicase_ATP-bd"/>
</dbReference>
<dbReference type="InterPro" id="IPR001650">
    <property type="entry name" value="Helicase_C-like"/>
</dbReference>
<dbReference type="InterPro" id="IPR027417">
    <property type="entry name" value="P-loop_NTPase"/>
</dbReference>
<dbReference type="InterPro" id="IPR000629">
    <property type="entry name" value="RNA-helicase_DEAD-box_CS"/>
</dbReference>
<dbReference type="InterPro" id="IPR014014">
    <property type="entry name" value="RNA_helicase_DEAD_Q_motif"/>
</dbReference>
<dbReference type="PANTHER" id="PTHR47959:SF1">
    <property type="entry name" value="ATP-DEPENDENT RNA HELICASE DBPA"/>
    <property type="match status" value="1"/>
</dbReference>
<dbReference type="PANTHER" id="PTHR47959">
    <property type="entry name" value="ATP-DEPENDENT RNA HELICASE RHLE-RELATED"/>
    <property type="match status" value="1"/>
</dbReference>
<dbReference type="Pfam" id="PF00270">
    <property type="entry name" value="DEAD"/>
    <property type="match status" value="1"/>
</dbReference>
<dbReference type="Pfam" id="PF00271">
    <property type="entry name" value="Helicase_C"/>
    <property type="match status" value="1"/>
</dbReference>
<dbReference type="SMART" id="SM00487">
    <property type="entry name" value="DEXDc"/>
    <property type="match status" value="1"/>
</dbReference>
<dbReference type="SMART" id="SM00490">
    <property type="entry name" value="HELICc"/>
    <property type="match status" value="1"/>
</dbReference>
<dbReference type="SUPFAM" id="SSF52540">
    <property type="entry name" value="P-loop containing nucleoside triphosphate hydrolases"/>
    <property type="match status" value="1"/>
</dbReference>
<dbReference type="PROSITE" id="PS00039">
    <property type="entry name" value="DEAD_ATP_HELICASE"/>
    <property type="match status" value="1"/>
</dbReference>
<dbReference type="PROSITE" id="PS51192">
    <property type="entry name" value="HELICASE_ATP_BIND_1"/>
    <property type="match status" value="1"/>
</dbReference>
<dbReference type="PROSITE" id="PS51194">
    <property type="entry name" value="HELICASE_CTER"/>
    <property type="match status" value="1"/>
</dbReference>
<dbReference type="PROSITE" id="PS51195">
    <property type="entry name" value="Q_MOTIF"/>
    <property type="match status" value="1"/>
</dbReference>
<comment type="function">
    <text evidence="1">ATP-binding RNA helicase involved in ribosome assembly.</text>
</comment>
<comment type="catalytic activity">
    <reaction>
        <text>ATP + H2O = ADP + phosphate + H(+)</text>
        <dbReference type="Rhea" id="RHEA:13065"/>
        <dbReference type="ChEBI" id="CHEBI:15377"/>
        <dbReference type="ChEBI" id="CHEBI:15378"/>
        <dbReference type="ChEBI" id="CHEBI:30616"/>
        <dbReference type="ChEBI" id="CHEBI:43474"/>
        <dbReference type="ChEBI" id="CHEBI:456216"/>
        <dbReference type="EC" id="3.6.4.13"/>
    </reaction>
</comment>
<comment type="subunit">
    <text evidence="1">Associates with pre-ribosomal particles.</text>
</comment>
<comment type="subcellular location">
    <subcellularLocation>
        <location evidence="1">Nucleus</location>
        <location evidence="1">Nucleolus</location>
    </subcellularLocation>
</comment>
<comment type="domain">
    <text>The Q motif is unique to and characteristic of the DEAD box family of RNA helicases and controls ATP binding and hydrolysis.</text>
</comment>
<comment type="similarity">
    <text evidence="5">Belongs to the DEAD box helicase family. DDX27/DRS1 subfamily.</text>
</comment>
<feature type="chain" id="PRO_0000282494" description="ATP-dependent RNA helicase drs1">
    <location>
        <begin position="1"/>
        <end position="829"/>
    </location>
</feature>
<feature type="domain" description="Helicase ATP-binding" evidence="2">
    <location>
        <begin position="324"/>
        <end position="498"/>
    </location>
</feature>
<feature type="domain" description="Helicase C-terminal" evidence="3">
    <location>
        <begin position="528"/>
        <end position="707"/>
    </location>
</feature>
<feature type="region of interest" description="Disordered" evidence="4">
    <location>
        <begin position="1"/>
        <end position="96"/>
    </location>
</feature>
<feature type="region of interest" description="Disordered" evidence="4">
    <location>
        <begin position="145"/>
        <end position="295"/>
    </location>
</feature>
<feature type="region of interest" description="Disordered" evidence="4">
    <location>
        <begin position="728"/>
        <end position="829"/>
    </location>
</feature>
<feature type="short sequence motif" description="Q motif">
    <location>
        <begin position="293"/>
        <end position="321"/>
    </location>
</feature>
<feature type="short sequence motif" description="DEAD box">
    <location>
        <begin position="446"/>
        <end position="449"/>
    </location>
</feature>
<feature type="compositionally biased region" description="Acidic residues" evidence="4">
    <location>
        <begin position="20"/>
        <end position="32"/>
    </location>
</feature>
<feature type="compositionally biased region" description="Basic residues" evidence="4">
    <location>
        <begin position="48"/>
        <end position="59"/>
    </location>
</feature>
<feature type="compositionally biased region" description="Acidic residues" evidence="4">
    <location>
        <begin position="63"/>
        <end position="78"/>
    </location>
</feature>
<feature type="compositionally biased region" description="Basic and acidic residues" evidence="4">
    <location>
        <begin position="150"/>
        <end position="163"/>
    </location>
</feature>
<feature type="compositionally biased region" description="Acidic residues" evidence="4">
    <location>
        <begin position="164"/>
        <end position="190"/>
    </location>
</feature>
<feature type="compositionally biased region" description="Acidic residues" evidence="4">
    <location>
        <begin position="218"/>
        <end position="228"/>
    </location>
</feature>
<feature type="compositionally biased region" description="Acidic residues" evidence="4">
    <location>
        <begin position="235"/>
        <end position="246"/>
    </location>
</feature>
<feature type="compositionally biased region" description="Acidic residues" evidence="4">
    <location>
        <begin position="258"/>
        <end position="271"/>
    </location>
</feature>
<feature type="compositionally biased region" description="Basic and acidic residues" evidence="4">
    <location>
        <begin position="272"/>
        <end position="291"/>
    </location>
</feature>
<feature type="compositionally biased region" description="Basic and acidic residues" evidence="4">
    <location>
        <begin position="749"/>
        <end position="791"/>
    </location>
</feature>
<feature type="compositionally biased region" description="Basic residues" evidence="4">
    <location>
        <begin position="800"/>
        <end position="815"/>
    </location>
</feature>
<feature type="binding site" evidence="2">
    <location>
        <begin position="337"/>
        <end position="344"/>
    </location>
    <ligand>
        <name>ATP</name>
        <dbReference type="ChEBI" id="CHEBI:30616"/>
    </ligand>
</feature>
<gene>
    <name type="primary">drh-11</name>
    <name type="synonym">drs1</name>
    <name type="ORF">NCU00235</name>
    <name type="ORF">NCU11175</name>
</gene>
<keyword id="KW-0067">ATP-binding</keyword>
<keyword id="KW-0347">Helicase</keyword>
<keyword id="KW-0378">Hydrolase</keyword>
<keyword id="KW-0547">Nucleotide-binding</keyword>
<keyword id="KW-0539">Nucleus</keyword>
<keyword id="KW-1185">Reference proteome</keyword>
<keyword id="KW-0690">Ribosome biogenesis</keyword>
<keyword id="KW-0694">RNA-binding</keyword>
<sequence length="829" mass="92026">MAPSQKRKAIDDDFILTISDNEEDIPLEEEQEVVPRKKAKTATQQSNKQKKKNNKKSKKQQQTEDDDDEAETKEDDAADLGIWGDNDEDDGAMDTEFQFVVDGQNEVDAEFDGWGFEGAHKGVVKGANAGGDKKAVDIDEIIRRRRERKAAKEGKTTATKEEEDKMEVDEEEDDIEEIDVDLDDDEDGVLADDAFGMGVGSDVEEEEEKQDAKMGGVDGEDEDSEGEDGEKKGEDEDEGDASDDDSVATAVEHPDDVQSSDDEEGIDEEEEAKMKEFFAPEEENQPKKKGEMSSFQEMSLSRPILRGLTSVGFTKPTPIQAKTIPISLMGKDVVGGAVTGSGKTAAFVVPILERLLYRPKKVPTTRVVILTPTRELAIQCHAVAVKLASHTDIKFCLAVGGLSLKVQEAELRLRPDVVIATPGRFIDHMRNSASFAVDTIEILVLDEADRMLEDGFADELNEILTTLPKSRQTMLFSATMTSSVDRLIRAGLNKPVRIMADSQKKTAGTLVQEFVRLRPGRESKREGYLLHICKTIYTERVIIFFRQKKIAHKMRIIFGLFGLSCAELHGSMNQAQRIQSVEDFRDGKVNFLLATDLASRGLDIKGVDTVINYEAPQTPEIYVHRVGRTARAGRSGTAITLAAEPDRKVVKAAVKAGKSQGAKISSRIIDPADADKWQAEIDELEDEIEEIMQEEKEEKQLQNMEMQVKKGENMIKYEDEISSRPKRTWFETQEDKKKAKAAGRAELNGVRDKLKSKNEGKLSNKDRKKLDTMQERKQERTYKKGSAERAGKGAVLNLKKVVKKVGRSAGPKKKGGNAGKGGKGKGRRK</sequence>